<name>DAPF_SALHS</name>
<feature type="chain" id="PRO_1000099263" description="Diaminopimelate epimerase">
    <location>
        <begin position="1"/>
        <end position="274"/>
    </location>
</feature>
<feature type="active site" description="Proton donor" evidence="1">
    <location>
        <position position="73"/>
    </location>
</feature>
<feature type="active site" description="Proton acceptor" evidence="1">
    <location>
        <position position="217"/>
    </location>
</feature>
<feature type="binding site" evidence="1">
    <location>
        <position position="11"/>
    </location>
    <ligand>
        <name>substrate</name>
    </ligand>
</feature>
<feature type="binding site" evidence="1">
    <location>
        <position position="44"/>
    </location>
    <ligand>
        <name>substrate</name>
    </ligand>
</feature>
<feature type="binding site" evidence="1">
    <location>
        <position position="64"/>
    </location>
    <ligand>
        <name>substrate</name>
    </ligand>
</feature>
<feature type="binding site" evidence="1">
    <location>
        <begin position="74"/>
        <end position="75"/>
    </location>
    <ligand>
        <name>substrate</name>
    </ligand>
</feature>
<feature type="binding site" evidence="1">
    <location>
        <position position="157"/>
    </location>
    <ligand>
        <name>substrate</name>
    </ligand>
</feature>
<feature type="binding site" evidence="1">
    <location>
        <position position="190"/>
    </location>
    <ligand>
        <name>substrate</name>
    </ligand>
</feature>
<feature type="binding site" evidence="1">
    <location>
        <begin position="208"/>
        <end position="209"/>
    </location>
    <ligand>
        <name>substrate</name>
    </ligand>
</feature>
<feature type="binding site" evidence="1">
    <location>
        <begin position="218"/>
        <end position="219"/>
    </location>
    <ligand>
        <name>substrate</name>
    </ligand>
</feature>
<feature type="site" description="Could be important to modulate the pK values of the two catalytic cysteine residues" evidence="1">
    <location>
        <position position="159"/>
    </location>
</feature>
<feature type="site" description="Could be important to modulate the pK values of the two catalytic cysteine residues" evidence="1">
    <location>
        <position position="208"/>
    </location>
</feature>
<feature type="site" description="Important for dimerization" evidence="1">
    <location>
        <position position="268"/>
    </location>
</feature>
<protein>
    <recommendedName>
        <fullName evidence="1">Diaminopimelate epimerase</fullName>
        <shortName evidence="1">DAP epimerase</shortName>
        <ecNumber evidence="1">5.1.1.7</ecNumber>
    </recommendedName>
    <alternativeName>
        <fullName evidence="1">PLP-independent amino acid racemase</fullName>
    </alternativeName>
</protein>
<organism>
    <name type="scientific">Salmonella heidelberg (strain SL476)</name>
    <dbReference type="NCBI Taxonomy" id="454169"/>
    <lineage>
        <taxon>Bacteria</taxon>
        <taxon>Pseudomonadati</taxon>
        <taxon>Pseudomonadota</taxon>
        <taxon>Gammaproteobacteria</taxon>
        <taxon>Enterobacterales</taxon>
        <taxon>Enterobacteriaceae</taxon>
        <taxon>Salmonella</taxon>
    </lineage>
</organism>
<gene>
    <name evidence="1" type="primary">dapF</name>
    <name type="ordered locus">SeHA_C4275</name>
</gene>
<accession>B4TB37</accession>
<dbReference type="EC" id="5.1.1.7" evidence="1"/>
<dbReference type="EMBL" id="CP001120">
    <property type="protein sequence ID" value="ACF67629.1"/>
    <property type="molecule type" value="Genomic_DNA"/>
</dbReference>
<dbReference type="RefSeq" id="WP_001160671.1">
    <property type="nucleotide sequence ID" value="NC_011083.1"/>
</dbReference>
<dbReference type="SMR" id="B4TB37"/>
<dbReference type="KEGG" id="seh:SeHA_C4275"/>
<dbReference type="HOGENOM" id="CLU_053306_1_1_6"/>
<dbReference type="UniPathway" id="UPA00034">
    <property type="reaction ID" value="UER00025"/>
</dbReference>
<dbReference type="Proteomes" id="UP000001866">
    <property type="component" value="Chromosome"/>
</dbReference>
<dbReference type="GO" id="GO:0005829">
    <property type="term" value="C:cytosol"/>
    <property type="evidence" value="ECO:0007669"/>
    <property type="project" value="TreeGrafter"/>
</dbReference>
<dbReference type="GO" id="GO:0008837">
    <property type="term" value="F:diaminopimelate epimerase activity"/>
    <property type="evidence" value="ECO:0007669"/>
    <property type="project" value="UniProtKB-UniRule"/>
</dbReference>
<dbReference type="GO" id="GO:0009089">
    <property type="term" value="P:lysine biosynthetic process via diaminopimelate"/>
    <property type="evidence" value="ECO:0007669"/>
    <property type="project" value="UniProtKB-UniRule"/>
</dbReference>
<dbReference type="FunFam" id="3.10.310.10:FF:000001">
    <property type="entry name" value="Diaminopimelate epimerase"/>
    <property type="match status" value="1"/>
</dbReference>
<dbReference type="FunFam" id="3.10.310.10:FF:000002">
    <property type="entry name" value="Diaminopimelate epimerase"/>
    <property type="match status" value="1"/>
</dbReference>
<dbReference type="Gene3D" id="3.10.310.10">
    <property type="entry name" value="Diaminopimelate Epimerase, Chain A, domain 1"/>
    <property type="match status" value="2"/>
</dbReference>
<dbReference type="HAMAP" id="MF_00197">
    <property type="entry name" value="DAP_epimerase"/>
    <property type="match status" value="1"/>
</dbReference>
<dbReference type="InterPro" id="IPR018510">
    <property type="entry name" value="DAP_epimerase_AS"/>
</dbReference>
<dbReference type="InterPro" id="IPR001653">
    <property type="entry name" value="DAP_epimerase_DapF"/>
</dbReference>
<dbReference type="NCBIfam" id="TIGR00652">
    <property type="entry name" value="DapF"/>
    <property type="match status" value="1"/>
</dbReference>
<dbReference type="PANTHER" id="PTHR31689:SF0">
    <property type="entry name" value="DIAMINOPIMELATE EPIMERASE"/>
    <property type="match status" value="1"/>
</dbReference>
<dbReference type="PANTHER" id="PTHR31689">
    <property type="entry name" value="DIAMINOPIMELATE EPIMERASE, CHLOROPLASTIC"/>
    <property type="match status" value="1"/>
</dbReference>
<dbReference type="Pfam" id="PF01678">
    <property type="entry name" value="DAP_epimerase"/>
    <property type="match status" value="2"/>
</dbReference>
<dbReference type="SUPFAM" id="SSF54506">
    <property type="entry name" value="Diaminopimelate epimerase-like"/>
    <property type="match status" value="1"/>
</dbReference>
<dbReference type="PROSITE" id="PS01326">
    <property type="entry name" value="DAP_EPIMERASE"/>
    <property type="match status" value="1"/>
</dbReference>
<reference key="1">
    <citation type="journal article" date="2011" name="J. Bacteriol.">
        <title>Comparative genomics of 28 Salmonella enterica isolates: evidence for CRISPR-mediated adaptive sublineage evolution.</title>
        <authorList>
            <person name="Fricke W.F."/>
            <person name="Mammel M.K."/>
            <person name="McDermott P.F."/>
            <person name="Tartera C."/>
            <person name="White D.G."/>
            <person name="Leclerc J.E."/>
            <person name="Ravel J."/>
            <person name="Cebula T.A."/>
        </authorList>
    </citation>
    <scope>NUCLEOTIDE SEQUENCE [LARGE SCALE GENOMIC DNA]</scope>
    <source>
        <strain>SL476</strain>
    </source>
</reference>
<keyword id="KW-0028">Amino-acid biosynthesis</keyword>
<keyword id="KW-0963">Cytoplasm</keyword>
<keyword id="KW-0413">Isomerase</keyword>
<keyword id="KW-0457">Lysine biosynthesis</keyword>
<proteinExistence type="inferred from homology"/>
<comment type="function">
    <text evidence="1">Catalyzes the stereoinversion of LL-2,6-diaminopimelate (L,L-DAP) to meso-diaminopimelate (meso-DAP), a precursor of L-lysine and an essential component of the bacterial peptidoglycan.</text>
</comment>
<comment type="catalytic activity">
    <reaction evidence="1">
        <text>(2S,6S)-2,6-diaminopimelate = meso-2,6-diaminopimelate</text>
        <dbReference type="Rhea" id="RHEA:15393"/>
        <dbReference type="ChEBI" id="CHEBI:57609"/>
        <dbReference type="ChEBI" id="CHEBI:57791"/>
        <dbReference type="EC" id="5.1.1.7"/>
    </reaction>
</comment>
<comment type="pathway">
    <text evidence="1">Amino-acid biosynthesis; L-lysine biosynthesis via DAP pathway; DL-2,6-diaminopimelate from LL-2,6-diaminopimelate: step 1/1.</text>
</comment>
<comment type="subunit">
    <text evidence="1">Homodimer.</text>
</comment>
<comment type="subcellular location">
    <subcellularLocation>
        <location evidence="1">Cytoplasm</location>
    </subcellularLocation>
</comment>
<comment type="similarity">
    <text evidence="1">Belongs to the diaminopimelate epimerase family.</text>
</comment>
<evidence type="ECO:0000255" key="1">
    <source>
        <dbReference type="HAMAP-Rule" id="MF_00197"/>
    </source>
</evidence>
<sequence>MQFSKMHGLGNDFMVVDAVTQNVFFSPELIRRLSDRHLGVGFDQLLVVEPPYDPELDFHYRIFNADGSEVSQCGNGARCFARFVRLKGLTNKRDIRVSTANGRMVLSVTEDELVRVNMGEPNFEPAQVPFRANKAEKTYIMRAAEQTILCGVVSMGNPHCVIQVDNVDTAAVETLGPVLESHERFPERANIGFMQVVRREHIRLRVYERGAGETRACGSGACAAVAVGIQQGLLAEEVRVELPGGRLDIAWKGPGHPLYMTGPAAHIYDGFIHL</sequence>